<keyword id="KW-0687">Ribonucleoprotein</keyword>
<keyword id="KW-0689">Ribosomal protein</keyword>
<keyword id="KW-0694">RNA-binding</keyword>
<keyword id="KW-0699">rRNA-binding</keyword>
<dbReference type="EMBL" id="CP001279">
    <property type="protein sequence ID" value="ACM93460.1"/>
    <property type="molecule type" value="Genomic_DNA"/>
</dbReference>
<dbReference type="RefSeq" id="WP_015902512.1">
    <property type="nucleotide sequence ID" value="NC_012115.1"/>
</dbReference>
<dbReference type="SMR" id="B9L9H9"/>
<dbReference type="STRING" id="598659.NAMH_0884"/>
<dbReference type="KEGG" id="nam:NAMH_0884"/>
<dbReference type="eggNOG" id="COG0184">
    <property type="taxonomic scope" value="Bacteria"/>
</dbReference>
<dbReference type="HOGENOM" id="CLU_148518_0_0_7"/>
<dbReference type="OrthoDB" id="9799262at2"/>
<dbReference type="Proteomes" id="UP000000448">
    <property type="component" value="Chromosome"/>
</dbReference>
<dbReference type="GO" id="GO:0022627">
    <property type="term" value="C:cytosolic small ribosomal subunit"/>
    <property type="evidence" value="ECO:0007669"/>
    <property type="project" value="TreeGrafter"/>
</dbReference>
<dbReference type="GO" id="GO:0019843">
    <property type="term" value="F:rRNA binding"/>
    <property type="evidence" value="ECO:0007669"/>
    <property type="project" value="UniProtKB-UniRule"/>
</dbReference>
<dbReference type="GO" id="GO:0003735">
    <property type="term" value="F:structural constituent of ribosome"/>
    <property type="evidence" value="ECO:0007669"/>
    <property type="project" value="InterPro"/>
</dbReference>
<dbReference type="GO" id="GO:0006412">
    <property type="term" value="P:translation"/>
    <property type="evidence" value="ECO:0007669"/>
    <property type="project" value="UniProtKB-UniRule"/>
</dbReference>
<dbReference type="CDD" id="cd00353">
    <property type="entry name" value="Ribosomal_S15p_S13e"/>
    <property type="match status" value="1"/>
</dbReference>
<dbReference type="FunFam" id="1.10.287.10:FF:000002">
    <property type="entry name" value="30S ribosomal protein S15"/>
    <property type="match status" value="1"/>
</dbReference>
<dbReference type="Gene3D" id="6.10.250.3130">
    <property type="match status" value="1"/>
</dbReference>
<dbReference type="Gene3D" id="1.10.287.10">
    <property type="entry name" value="S15/NS1, RNA-binding"/>
    <property type="match status" value="1"/>
</dbReference>
<dbReference type="HAMAP" id="MF_01343_B">
    <property type="entry name" value="Ribosomal_uS15_B"/>
    <property type="match status" value="1"/>
</dbReference>
<dbReference type="InterPro" id="IPR000589">
    <property type="entry name" value="Ribosomal_uS15"/>
</dbReference>
<dbReference type="InterPro" id="IPR005290">
    <property type="entry name" value="Ribosomal_uS15_bac-type"/>
</dbReference>
<dbReference type="InterPro" id="IPR009068">
    <property type="entry name" value="uS15_NS1_RNA-bd_sf"/>
</dbReference>
<dbReference type="NCBIfam" id="TIGR00952">
    <property type="entry name" value="S15_bact"/>
    <property type="match status" value="1"/>
</dbReference>
<dbReference type="PANTHER" id="PTHR23321">
    <property type="entry name" value="RIBOSOMAL PROTEIN S15, BACTERIAL AND ORGANELLAR"/>
    <property type="match status" value="1"/>
</dbReference>
<dbReference type="PANTHER" id="PTHR23321:SF26">
    <property type="entry name" value="SMALL RIBOSOMAL SUBUNIT PROTEIN US15M"/>
    <property type="match status" value="1"/>
</dbReference>
<dbReference type="Pfam" id="PF00312">
    <property type="entry name" value="Ribosomal_S15"/>
    <property type="match status" value="1"/>
</dbReference>
<dbReference type="SMART" id="SM01387">
    <property type="entry name" value="Ribosomal_S15"/>
    <property type="match status" value="1"/>
</dbReference>
<dbReference type="SUPFAM" id="SSF47060">
    <property type="entry name" value="S15/NS1 RNA-binding domain"/>
    <property type="match status" value="1"/>
</dbReference>
<dbReference type="PROSITE" id="PS00362">
    <property type="entry name" value="RIBOSOMAL_S15"/>
    <property type="match status" value="1"/>
</dbReference>
<feature type="chain" id="PRO_1000166431" description="Small ribosomal subunit protein uS15">
    <location>
        <begin position="1"/>
        <end position="91"/>
    </location>
</feature>
<proteinExistence type="inferred from homology"/>
<name>RS15_NAUPA</name>
<protein>
    <recommendedName>
        <fullName evidence="1">Small ribosomal subunit protein uS15</fullName>
    </recommendedName>
    <alternativeName>
        <fullName evidence="2">30S ribosomal protein S15</fullName>
    </alternativeName>
</protein>
<accession>B9L9H9</accession>
<reference key="1">
    <citation type="journal article" date="2009" name="PLoS Genet.">
        <title>Adaptations to submarine hydrothermal environments exemplified by the genome of Nautilia profundicola.</title>
        <authorList>
            <person name="Campbell B.J."/>
            <person name="Smith J.L."/>
            <person name="Hanson T.E."/>
            <person name="Klotz M.G."/>
            <person name="Stein L.Y."/>
            <person name="Lee C.K."/>
            <person name="Wu D."/>
            <person name="Robinson J.M."/>
            <person name="Khouri H.M."/>
            <person name="Eisen J.A."/>
            <person name="Cary S.C."/>
        </authorList>
    </citation>
    <scope>NUCLEOTIDE SEQUENCE [LARGE SCALE GENOMIC DNA]</scope>
    <source>
        <strain>ATCC BAA-1463 / DSM 18972 / AmH</strain>
    </source>
</reference>
<organism>
    <name type="scientific">Nautilia profundicola (strain ATCC BAA-1463 / DSM 18972 / AmH)</name>
    <dbReference type="NCBI Taxonomy" id="598659"/>
    <lineage>
        <taxon>Bacteria</taxon>
        <taxon>Pseudomonadati</taxon>
        <taxon>Campylobacterota</taxon>
        <taxon>Epsilonproteobacteria</taxon>
        <taxon>Nautiliales</taxon>
        <taxon>Nautiliaceae</taxon>
        <taxon>Nautilia</taxon>
    </lineage>
</organism>
<evidence type="ECO:0000255" key="1">
    <source>
        <dbReference type="HAMAP-Rule" id="MF_01343"/>
    </source>
</evidence>
<evidence type="ECO:0000305" key="2"/>
<gene>
    <name evidence="1" type="primary">rpsO</name>
    <name type="ordered locus">NAMH_0884</name>
</gene>
<sequence>MALDSAKKREIIAKFGNDEKDTGSPAVQIALLTERINEINEHLQQHKHDHSSRLGLLKLVGQRKRLMRYLKRKDHDKYLEVITALNLRDRV</sequence>
<comment type="function">
    <text evidence="1">One of the primary rRNA binding proteins, it binds directly to 16S rRNA where it helps nucleate assembly of the platform of the 30S subunit by binding and bridging several RNA helices of the 16S rRNA.</text>
</comment>
<comment type="function">
    <text evidence="1">Forms an intersubunit bridge (bridge B4) with the 23S rRNA of the 50S subunit in the ribosome.</text>
</comment>
<comment type="subunit">
    <text evidence="1">Part of the 30S ribosomal subunit. Forms a bridge to the 50S subunit in the 70S ribosome, contacting the 23S rRNA.</text>
</comment>
<comment type="similarity">
    <text evidence="1">Belongs to the universal ribosomal protein uS15 family.</text>
</comment>